<accession>A6T521</accession>
<gene>
    <name evidence="1" type="primary">nqrA</name>
    <name type="ordered locus">KPN78578_02310</name>
    <name type="ORF">KPN_00239</name>
</gene>
<feature type="chain" id="PRO_1000060118" description="Na(+)-translocating NADH-quinone reductase subunit A">
    <location>
        <begin position="1"/>
        <end position="447"/>
    </location>
</feature>
<protein>
    <recommendedName>
        <fullName evidence="1">Na(+)-translocating NADH-quinone reductase subunit A</fullName>
        <shortName evidence="1">Na(+)-NQR subunit A</shortName>
        <shortName evidence="1">Na(+)-translocating NQR subunit A</shortName>
        <ecNumber evidence="1">7.2.1.1</ecNumber>
    </recommendedName>
    <alternativeName>
        <fullName evidence="1">NQR complex subunit A</fullName>
    </alternativeName>
    <alternativeName>
        <fullName evidence="1">NQR-1 subunit A</fullName>
    </alternativeName>
</protein>
<comment type="function">
    <text evidence="1">NQR complex catalyzes the reduction of ubiquinone-1 to ubiquinol by two successive reactions, coupled with the transport of Na(+) ions from the cytoplasm to the periplasm. NqrA to NqrE are probably involved in the second step, the conversion of ubisemiquinone to ubiquinol.</text>
</comment>
<comment type="catalytic activity">
    <reaction evidence="1">
        <text>a ubiquinone + n Na(+)(in) + NADH + H(+) = a ubiquinol + n Na(+)(out) + NAD(+)</text>
        <dbReference type="Rhea" id="RHEA:47748"/>
        <dbReference type="Rhea" id="RHEA-COMP:9565"/>
        <dbReference type="Rhea" id="RHEA-COMP:9566"/>
        <dbReference type="ChEBI" id="CHEBI:15378"/>
        <dbReference type="ChEBI" id="CHEBI:16389"/>
        <dbReference type="ChEBI" id="CHEBI:17976"/>
        <dbReference type="ChEBI" id="CHEBI:29101"/>
        <dbReference type="ChEBI" id="CHEBI:57540"/>
        <dbReference type="ChEBI" id="CHEBI:57945"/>
        <dbReference type="EC" id="7.2.1.1"/>
    </reaction>
</comment>
<comment type="subunit">
    <text evidence="1">Composed of six subunits; NqrA, NqrB, NqrC, NqrD, NqrE and NqrF.</text>
</comment>
<comment type="similarity">
    <text evidence="1">Belongs to the NqrA family.</text>
</comment>
<proteinExistence type="inferred from homology"/>
<reference key="1">
    <citation type="submission" date="2006-09" db="EMBL/GenBank/DDBJ databases">
        <authorList>
            <consortium name="The Klebsiella pneumonia Genome Sequencing Project"/>
            <person name="McClelland M."/>
            <person name="Sanderson E.K."/>
            <person name="Spieth J."/>
            <person name="Clifton W.S."/>
            <person name="Latreille P."/>
            <person name="Sabo A."/>
            <person name="Pepin K."/>
            <person name="Bhonagiri V."/>
            <person name="Porwollik S."/>
            <person name="Ali J."/>
            <person name="Wilson R.K."/>
        </authorList>
    </citation>
    <scope>NUCLEOTIDE SEQUENCE [LARGE SCALE GENOMIC DNA]</scope>
    <source>
        <strain>ATCC 700721 / MGH 78578</strain>
    </source>
</reference>
<keyword id="KW-0406">Ion transport</keyword>
<keyword id="KW-0520">NAD</keyword>
<keyword id="KW-0915">Sodium</keyword>
<keyword id="KW-0739">Sodium transport</keyword>
<keyword id="KW-1278">Translocase</keyword>
<keyword id="KW-0813">Transport</keyword>
<keyword id="KW-0830">Ubiquinone</keyword>
<dbReference type="EC" id="7.2.1.1" evidence="1"/>
<dbReference type="EMBL" id="CP000647">
    <property type="protein sequence ID" value="ABR75692.1"/>
    <property type="molecule type" value="Genomic_DNA"/>
</dbReference>
<dbReference type="RefSeq" id="WP_002889702.1">
    <property type="nucleotide sequence ID" value="NC_009648.1"/>
</dbReference>
<dbReference type="SMR" id="A6T521"/>
<dbReference type="STRING" id="272620.KPN_00239"/>
<dbReference type="jPOST" id="A6T521"/>
<dbReference type="PaxDb" id="272620-KPN_00239"/>
<dbReference type="EnsemblBacteria" id="ABR75692">
    <property type="protein sequence ID" value="ABR75692"/>
    <property type="gene ID" value="KPN_00239"/>
</dbReference>
<dbReference type="KEGG" id="kpn:KPN_00239"/>
<dbReference type="HOGENOM" id="CLU_046656_0_0_6"/>
<dbReference type="Proteomes" id="UP000000265">
    <property type="component" value="Chromosome"/>
</dbReference>
<dbReference type="GO" id="GO:0016655">
    <property type="term" value="F:oxidoreductase activity, acting on NAD(P)H, quinone or similar compound as acceptor"/>
    <property type="evidence" value="ECO:0007669"/>
    <property type="project" value="UniProtKB-UniRule"/>
</dbReference>
<dbReference type="GO" id="GO:0006814">
    <property type="term" value="P:sodium ion transport"/>
    <property type="evidence" value="ECO:0007669"/>
    <property type="project" value="UniProtKB-UniRule"/>
</dbReference>
<dbReference type="Gene3D" id="2.40.50.100">
    <property type="match status" value="1"/>
</dbReference>
<dbReference type="HAMAP" id="MF_00425">
    <property type="entry name" value="NqrA"/>
    <property type="match status" value="1"/>
</dbReference>
<dbReference type="InterPro" id="IPR008703">
    <property type="entry name" value="NqrA"/>
</dbReference>
<dbReference type="InterPro" id="IPR056148">
    <property type="entry name" value="NQRA_2nd"/>
</dbReference>
<dbReference type="InterPro" id="IPR022615">
    <property type="entry name" value="NqrA_C_domain"/>
</dbReference>
<dbReference type="InterPro" id="IPR056147">
    <property type="entry name" value="NQRA_N"/>
</dbReference>
<dbReference type="NCBIfam" id="TIGR01936">
    <property type="entry name" value="nqrA"/>
    <property type="match status" value="1"/>
</dbReference>
<dbReference type="NCBIfam" id="NF003759">
    <property type="entry name" value="PRK05352.1-2"/>
    <property type="match status" value="1"/>
</dbReference>
<dbReference type="PANTHER" id="PTHR37839">
    <property type="entry name" value="NA(+)-TRANSLOCATING NADH-QUINONE REDUCTASE SUBUNIT A"/>
    <property type="match status" value="1"/>
</dbReference>
<dbReference type="PANTHER" id="PTHR37839:SF1">
    <property type="entry name" value="NA(+)-TRANSLOCATING NADH-QUINONE REDUCTASE SUBUNIT A"/>
    <property type="match status" value="1"/>
</dbReference>
<dbReference type="Pfam" id="PF24836">
    <property type="entry name" value="NQRA_2nd"/>
    <property type="match status" value="1"/>
</dbReference>
<dbReference type="Pfam" id="PF05896">
    <property type="entry name" value="NQRA_N"/>
    <property type="match status" value="1"/>
</dbReference>
<dbReference type="Pfam" id="PF11973">
    <property type="entry name" value="NQRA_SLBB"/>
    <property type="match status" value="1"/>
</dbReference>
<name>NQRA_KLEP7</name>
<sequence length="447" mass="48417">MIKITKGLDLPIAGMPLQQISPAPAVKRVALLGEEYVGMRPAMAVKEGDRVKKGQILFEDKKIPGVCFTAPASGIVSAIHRGERRVLQSVVIDIEGNDAVAFTRYAADALAELPRDTVQQQLLASGQWTALRTRPFSKTPLPGSTPAAIFVNAMDTNPLAAEPQPIILAERAAFDAGLTVLTRLTDGKVHVCQPSGGKLGGHPLGQVCFNQFSGPHPAGLPGTHIHFLEPVSLNKQVWHLNYQDAIAIGKLFLDGELYCERIIALGGPQVTSPRLVKTTLGASLEDLLAGELQEGENRVISGSVLSGARAHGPHAFLGRFHLQVSVVKEGREKELFGWVMPGKEKFSITRTTLGHFFKRKRFHFSTDTNGGERAMVPIGNYERVMPLDILPTILLRDLLAGDTDSAQALGCLELDEEDLALCTYVCPGKYEYGPALRSVLTRIEQEG</sequence>
<evidence type="ECO:0000255" key="1">
    <source>
        <dbReference type="HAMAP-Rule" id="MF_00425"/>
    </source>
</evidence>
<organism>
    <name type="scientific">Klebsiella pneumoniae subsp. pneumoniae (strain ATCC 700721 / MGH 78578)</name>
    <dbReference type="NCBI Taxonomy" id="272620"/>
    <lineage>
        <taxon>Bacteria</taxon>
        <taxon>Pseudomonadati</taxon>
        <taxon>Pseudomonadota</taxon>
        <taxon>Gammaproteobacteria</taxon>
        <taxon>Enterobacterales</taxon>
        <taxon>Enterobacteriaceae</taxon>
        <taxon>Klebsiella/Raoultella group</taxon>
        <taxon>Klebsiella</taxon>
        <taxon>Klebsiella pneumoniae complex</taxon>
    </lineage>
</organism>